<organism>
    <name type="scientific">Penicillium brasilianum</name>
    <dbReference type="NCBI Taxonomy" id="104259"/>
    <lineage>
        <taxon>Eukaryota</taxon>
        <taxon>Fungi</taxon>
        <taxon>Dikarya</taxon>
        <taxon>Ascomycota</taxon>
        <taxon>Pezizomycotina</taxon>
        <taxon>Eurotiomycetes</taxon>
        <taxon>Eurotiomycetidae</taxon>
        <taxon>Eurotiales</taxon>
        <taxon>Aspergillaceae</taxon>
        <taxon>Penicillium</taxon>
    </lineage>
</organism>
<dbReference type="EC" id="1.-.-.-" evidence="9"/>
<dbReference type="EMBL" id="LC127182">
    <property type="protein sequence ID" value="BAV69305.1"/>
    <property type="molecule type" value="Genomic_DNA"/>
</dbReference>
<dbReference type="SMR" id="A0A1E1FFL4"/>
<dbReference type="GlyCosmos" id="A0A1E1FFL4">
    <property type="glycosylation" value="2 sites, No reported glycans"/>
</dbReference>
<dbReference type="UniPathway" id="UPA00213"/>
<dbReference type="GO" id="GO:0016020">
    <property type="term" value="C:membrane"/>
    <property type="evidence" value="ECO:0007669"/>
    <property type="project" value="UniProtKB-SubCell"/>
</dbReference>
<dbReference type="GO" id="GO:0020037">
    <property type="term" value="F:heme binding"/>
    <property type="evidence" value="ECO:0007669"/>
    <property type="project" value="InterPro"/>
</dbReference>
<dbReference type="GO" id="GO:0005506">
    <property type="term" value="F:iron ion binding"/>
    <property type="evidence" value="ECO:0007669"/>
    <property type="project" value="InterPro"/>
</dbReference>
<dbReference type="GO" id="GO:0004497">
    <property type="term" value="F:monooxygenase activity"/>
    <property type="evidence" value="ECO:0007669"/>
    <property type="project" value="UniProtKB-KW"/>
</dbReference>
<dbReference type="GO" id="GO:0016705">
    <property type="term" value="F:oxidoreductase activity, acting on paired donors, with incorporation or reduction of molecular oxygen"/>
    <property type="evidence" value="ECO:0007669"/>
    <property type="project" value="InterPro"/>
</dbReference>
<dbReference type="GO" id="GO:0043386">
    <property type="term" value="P:mycotoxin biosynthetic process"/>
    <property type="evidence" value="ECO:0007669"/>
    <property type="project" value="UniProtKB-ARBA"/>
</dbReference>
<dbReference type="GO" id="GO:0016114">
    <property type="term" value="P:terpenoid biosynthetic process"/>
    <property type="evidence" value="ECO:0007669"/>
    <property type="project" value="UniProtKB-UniPathway"/>
</dbReference>
<dbReference type="CDD" id="cd11041">
    <property type="entry name" value="CYP503A1-like"/>
    <property type="match status" value="1"/>
</dbReference>
<dbReference type="Gene3D" id="1.10.630.10">
    <property type="entry name" value="Cytochrome P450"/>
    <property type="match status" value="1"/>
</dbReference>
<dbReference type="InterPro" id="IPR001128">
    <property type="entry name" value="Cyt_P450"/>
</dbReference>
<dbReference type="InterPro" id="IPR017972">
    <property type="entry name" value="Cyt_P450_CS"/>
</dbReference>
<dbReference type="InterPro" id="IPR002403">
    <property type="entry name" value="Cyt_P450_E_grp-IV"/>
</dbReference>
<dbReference type="InterPro" id="IPR036396">
    <property type="entry name" value="Cyt_P450_sf"/>
</dbReference>
<dbReference type="PANTHER" id="PTHR46206">
    <property type="entry name" value="CYTOCHROME P450"/>
    <property type="match status" value="1"/>
</dbReference>
<dbReference type="PANTHER" id="PTHR46206:SF2">
    <property type="entry name" value="CYTOCHROME P450 MONOOXYGENASE AUSG-RELATED"/>
    <property type="match status" value="1"/>
</dbReference>
<dbReference type="Pfam" id="PF00067">
    <property type="entry name" value="p450"/>
    <property type="match status" value="1"/>
</dbReference>
<dbReference type="PRINTS" id="PR00465">
    <property type="entry name" value="EP450IV"/>
</dbReference>
<dbReference type="SUPFAM" id="SSF48264">
    <property type="entry name" value="Cytochrome P450"/>
    <property type="match status" value="1"/>
</dbReference>
<dbReference type="PROSITE" id="PS00086">
    <property type="entry name" value="CYTOCHROME_P450"/>
    <property type="match status" value="1"/>
</dbReference>
<sequence>MHQLLENLSGNGMGLLIPLGLSWLIWTILLPKQQYRGKLFNDRARFEWFYTKARRRFLENGGVILNNAFKKSENSFYVMTSREVEIVLNPKYMNEVRNDDRFAVTERVDQLLHGDVPGFGIIKHSAQTHKIFSNTFQSRVVREIGTFLVPIFEEIDHFLETQWTDNEEWHAFSLHPSMVQLVSQESTRLFLGPEMCRDAHWLQASVKYIQSFFMGIDLLDSWRPIFRPLVSKFSKTGKQIRSDLAEARQILSPFIADRQARKAKGEKFNDLLQWFDDAARGAEYDAPLLILRSSMAAVHSTSDLLTKAIFEICTQPGLIDDIREEAIRVFKEHGLRQTAIQELRLTDSVLKETQRLKPLQTTAFIRLTKEDVVLSDGLEIPKGTPIRISNHHMWDPEVSEYPNADQFDGYRFYKLRQVPGQEQTAQLATVSPSHTGFGLGKHACPGRFFAATATKVILCKILLDYDLKLLDGQRPKTMWRGDAQVPDPMCQIVVRRRKEEFNLSSLLHDVK</sequence>
<evidence type="ECO:0000250" key="1">
    <source>
        <dbReference type="UniProtKB" id="P04798"/>
    </source>
</evidence>
<evidence type="ECO:0000250" key="2">
    <source>
        <dbReference type="UniProtKB" id="Q5ATJ7"/>
    </source>
</evidence>
<evidence type="ECO:0000255" key="3"/>
<evidence type="ECO:0000255" key="4">
    <source>
        <dbReference type="PROSITE-ProRule" id="PRU00498"/>
    </source>
</evidence>
<evidence type="ECO:0000269" key="5">
    <source>
    </source>
</evidence>
<evidence type="ECO:0000269" key="6">
    <source>
    </source>
</evidence>
<evidence type="ECO:0000303" key="7">
    <source>
    </source>
</evidence>
<evidence type="ECO:0000305" key="8"/>
<evidence type="ECO:0000305" key="9">
    <source>
    </source>
</evidence>
<evidence type="ECO:0000305" key="10">
    <source>
    </source>
</evidence>
<evidence type="ECO:0000305" key="11">
    <source>
    </source>
</evidence>
<reference key="1">
    <citation type="journal article" date="2016" name="J. Am. Chem. Soc.">
        <title>Discovery of key dioxygenases that diverged the paraherquonin and acetoxydehydroaustin pathways in Penicillium brasilianum.</title>
        <authorList>
            <person name="Matsuda Y."/>
            <person name="Iwabuchi T."/>
            <person name="Fujimoto T."/>
            <person name="Awakawa T."/>
            <person name="Nakashima Y."/>
            <person name="Mori T."/>
            <person name="Zhang H."/>
            <person name="Hayashi F."/>
            <person name="Abe I."/>
        </authorList>
    </citation>
    <scope>NUCLEOTIDE SEQUENCE [GENOMIC DNA]</scope>
    <scope>FUNCTION</scope>
    <scope>PATHWAY</scope>
    <source>
        <strain>ATCC 22354 / NBRC 6234 / CBS 338.59 / FRR 3454 / IMI 68220</strain>
    </source>
</reference>
<reference key="2">
    <citation type="journal article" date="2017" name="Nat. Chem. Biol.">
        <title>Molecular basis for the unusual ring reconstruction in fungal meroterpenoid biogenesis.</title>
        <authorList>
            <person name="Mori T."/>
            <person name="Iwabuchi T."/>
            <person name="Hoshino S."/>
            <person name="Wang H."/>
            <person name="Matsuda Y."/>
            <person name="Abe I."/>
        </authorList>
    </citation>
    <scope>FUNCTION</scope>
</reference>
<reference key="3">
    <citation type="journal article" date="2018" name="Nat. Commun.">
        <title>Structure function and engineering of multifunctional non-heme iron dependent oxygenases in fungal meroterpenoid biosynthesis.</title>
        <authorList>
            <person name="Nakashima Y."/>
            <person name="Mori T."/>
            <person name="Nakamura H."/>
            <person name="Awakawa T."/>
            <person name="Hoshino S."/>
            <person name="Senda M."/>
            <person name="Senda T."/>
            <person name="Abe I."/>
        </authorList>
    </citation>
    <scope>FUNCTION</scope>
</reference>
<gene>
    <name evidence="7" type="primary">prhD</name>
</gene>
<keyword id="KW-0325">Glycoprotein</keyword>
<keyword id="KW-0349">Heme</keyword>
<keyword id="KW-0408">Iron</keyword>
<keyword id="KW-0472">Membrane</keyword>
<keyword id="KW-0479">Metal-binding</keyword>
<keyword id="KW-0503">Monooxygenase</keyword>
<keyword id="KW-0560">Oxidoreductase</keyword>
<keyword id="KW-0812">Transmembrane</keyword>
<keyword id="KW-1133">Transmembrane helix</keyword>
<comment type="function">
    <text evidence="2 5 6 9 10 11">Cytochrome P450 monooxygenase; part of the gene cluster that mediates the biosynthesis of paraherquonin, a meroterpenoid with a unique, highly congested hexacyclic molecular architecture (PubMed:27602587). The first step of the pathway is the synthesis of 3,5-dimethylorsellinic acid (DMOA) by the polyketide synthase prhL (By similarity). Synthesis of DMOA is followed by farnesylation by the prenyltransferase prhE, methylesterification by the methyl-transferase prhM, epoxidation of the prenyl chain by the flavin-dependent monooxygenase prhF, and cyclization of the farnesyl moiety by the terpene cyclase prhH, to yield the tetracyclic intermediate, protoaustinoid A (By similarity). The short chain dehydrogenase prhI then oxidizes the C-3 alcohol group of the terpene cyclase product to transform protoaustinoid A into protoaustinoid B (PubMed:27602587). The FAD-binding monooxygenase prhJ catalyzes the oxidation of protoaustinoid B into preaustinoid A which is further oxidized into preaustinoid A1 by FAD-binding monooxygenase phrK (PubMed:27602587). Finally, prhA leads to berkeleydione via the berkeleyone B intermediate (PubMed:27602587, PubMed:29317628). PrhA is a multifunctional dioxygenase that first desaturates at C5-C6 to form berkeleyone B, followed by rearrangement of the A/B-ring to form the cycloheptadiene moiety in berkeleydione (PubMed:27602587, PubMed:29317628). Berkeleydione serves as the key intermediate for the biosynthesis of paraherquonin as well as many other meroterpenoids (Probable). The cytochrome P450 monooxygenases prhB, prhD, and prhN, as well as the isomerase prhC, are probably involved in the late stage of paraherquonin biosynthesis, after the production of berkeleydione (Probable). Especially prhC might be a multifunctional enzyme that catalyzes the D-ring expansion via intramolecular methoxy rearrangement, as well as the hydrolysis of the expanded D-ring (Probable).</text>
</comment>
<comment type="cofactor">
    <cofactor evidence="1">
        <name>heme</name>
        <dbReference type="ChEBI" id="CHEBI:30413"/>
    </cofactor>
</comment>
<comment type="pathway">
    <text evidence="9">Secondary metabolite biosynthesis; terpenoid biosynthesis.</text>
</comment>
<comment type="subcellular location">
    <subcellularLocation>
        <location evidence="3">Membrane</location>
        <topology evidence="3">Single-pass membrane protein</topology>
    </subcellularLocation>
</comment>
<comment type="similarity">
    <text evidence="8">Belongs to the cytochrome P450 family.</text>
</comment>
<accession>A0A1E1FFL4</accession>
<protein>
    <recommendedName>
        <fullName evidence="7">Cytochrome P450 monooxygenase prhD</fullName>
        <ecNumber evidence="9">1.-.-.-</ecNumber>
    </recommendedName>
    <alternativeName>
        <fullName evidence="7">Paraherquonin biosynthesis cluster protein D</fullName>
    </alternativeName>
</protein>
<feature type="chain" id="PRO_0000449164" description="Cytochrome P450 monooxygenase prhD">
    <location>
        <begin position="1"/>
        <end position="511"/>
    </location>
</feature>
<feature type="transmembrane region" description="Helical" evidence="3">
    <location>
        <begin position="10"/>
        <end position="30"/>
    </location>
</feature>
<feature type="binding site" description="axial binding residue" evidence="1">
    <location>
        <position position="444"/>
    </location>
    <ligand>
        <name>heme</name>
        <dbReference type="ChEBI" id="CHEBI:30413"/>
    </ligand>
    <ligandPart>
        <name>Fe</name>
        <dbReference type="ChEBI" id="CHEBI:18248"/>
    </ligandPart>
</feature>
<feature type="glycosylation site" description="N-linked (GlcNAc...) asparagine" evidence="4">
    <location>
        <position position="7"/>
    </location>
</feature>
<feature type="glycosylation site" description="N-linked (GlcNAc...) asparagine" evidence="4">
    <location>
        <position position="502"/>
    </location>
</feature>
<name>PRHD_PENBI</name>
<proteinExistence type="inferred from homology"/>